<sequence length="529" mass="59640">MSPSEYALEVAKRRTFAIISHPDAGKTTITEKVLLFGHAIQTAGTVKGRGSSHHAKSDWMEMEKQRGISITTSVMQFPYGGCLVNLLDTPGHEDFSEDTYRTLTAVDCCLMVIDAAKGVEDRTRKLMEVTRLRDTPILTFMNKLDREIRDPMEVLDEVERELNIACSPITWPIGCGKSFKGVYHLHKDETYLYQSGKGHTIQEVRIVKGLNNPDLDVAVGEDLAKQFRQELELVQGASHEFDHEAFLSGDLTPVFFGTALGNFGVDHMLDGLVEWAPAPMPRKTDTRVVVASEEKFTGFVFKIQANMDPKHRDRVAFMRVVSGRFEKGMKLRQVRTKKDVVISDALTFMAGDRSHVEEAYAGDIIGLHNHGTIQIGDTFTQGEDMKFTGIPNFAPELFRRIRLRDPLKQKQLLKGLVQLSEEGAVQVFRPLSNNDLIVGAVGVLQFEVVSSRLKSEYNVEAVYESVNVSTARWVECHDVKKFEEFKRKNELNLALDGGDNLSYIAPTMVNLNITQERYPDVIFRKTREH</sequence>
<name>RF3_YERPE</name>
<keyword id="KW-0963">Cytoplasm</keyword>
<keyword id="KW-0342">GTP-binding</keyword>
<keyword id="KW-0547">Nucleotide-binding</keyword>
<keyword id="KW-0648">Protein biosynthesis</keyword>
<keyword id="KW-1185">Reference proteome</keyword>
<gene>
    <name evidence="1" type="primary">prfC</name>
    <name type="ordered locus">YPO0430</name>
    <name type="ordered locus">y3749</name>
    <name type="ordered locus">YP_3751</name>
</gene>
<proteinExistence type="inferred from homology"/>
<organism>
    <name type="scientific">Yersinia pestis</name>
    <dbReference type="NCBI Taxonomy" id="632"/>
    <lineage>
        <taxon>Bacteria</taxon>
        <taxon>Pseudomonadati</taxon>
        <taxon>Pseudomonadota</taxon>
        <taxon>Gammaproteobacteria</taxon>
        <taxon>Enterobacterales</taxon>
        <taxon>Yersiniaceae</taxon>
        <taxon>Yersinia</taxon>
    </lineage>
</organism>
<reference key="1">
    <citation type="journal article" date="2001" name="Nature">
        <title>Genome sequence of Yersinia pestis, the causative agent of plague.</title>
        <authorList>
            <person name="Parkhill J."/>
            <person name="Wren B.W."/>
            <person name="Thomson N.R."/>
            <person name="Titball R.W."/>
            <person name="Holden M.T.G."/>
            <person name="Prentice M.B."/>
            <person name="Sebaihia M."/>
            <person name="James K.D."/>
            <person name="Churcher C.M."/>
            <person name="Mungall K.L."/>
            <person name="Baker S."/>
            <person name="Basham D."/>
            <person name="Bentley S.D."/>
            <person name="Brooks K."/>
            <person name="Cerdeno-Tarraga A.-M."/>
            <person name="Chillingworth T."/>
            <person name="Cronin A."/>
            <person name="Davies R.M."/>
            <person name="Davis P."/>
            <person name="Dougan G."/>
            <person name="Feltwell T."/>
            <person name="Hamlin N."/>
            <person name="Holroyd S."/>
            <person name="Jagels K."/>
            <person name="Karlyshev A.V."/>
            <person name="Leather S."/>
            <person name="Moule S."/>
            <person name="Oyston P.C.F."/>
            <person name="Quail M.A."/>
            <person name="Rutherford K.M."/>
            <person name="Simmonds M."/>
            <person name="Skelton J."/>
            <person name="Stevens K."/>
            <person name="Whitehead S."/>
            <person name="Barrell B.G."/>
        </authorList>
    </citation>
    <scope>NUCLEOTIDE SEQUENCE [LARGE SCALE GENOMIC DNA]</scope>
    <source>
        <strain>CO-92 / Biovar Orientalis</strain>
    </source>
</reference>
<reference key="2">
    <citation type="journal article" date="2002" name="J. Bacteriol.">
        <title>Genome sequence of Yersinia pestis KIM.</title>
        <authorList>
            <person name="Deng W."/>
            <person name="Burland V."/>
            <person name="Plunkett G. III"/>
            <person name="Boutin A."/>
            <person name="Mayhew G.F."/>
            <person name="Liss P."/>
            <person name="Perna N.T."/>
            <person name="Rose D.J."/>
            <person name="Mau B."/>
            <person name="Zhou S."/>
            <person name="Schwartz D.C."/>
            <person name="Fetherston J.D."/>
            <person name="Lindler L.E."/>
            <person name="Brubaker R.R."/>
            <person name="Plano G.V."/>
            <person name="Straley S.C."/>
            <person name="McDonough K.A."/>
            <person name="Nilles M.L."/>
            <person name="Matson J.S."/>
            <person name="Blattner F.R."/>
            <person name="Perry R.D."/>
        </authorList>
    </citation>
    <scope>NUCLEOTIDE SEQUENCE [LARGE SCALE GENOMIC DNA]</scope>
    <source>
        <strain>KIM10+ / Biovar Mediaevalis</strain>
    </source>
</reference>
<reference key="3">
    <citation type="journal article" date="2004" name="DNA Res.">
        <title>Complete genome sequence of Yersinia pestis strain 91001, an isolate avirulent to humans.</title>
        <authorList>
            <person name="Song Y."/>
            <person name="Tong Z."/>
            <person name="Wang J."/>
            <person name="Wang L."/>
            <person name="Guo Z."/>
            <person name="Han Y."/>
            <person name="Zhang J."/>
            <person name="Pei D."/>
            <person name="Zhou D."/>
            <person name="Qin H."/>
            <person name="Pang X."/>
            <person name="Han Y."/>
            <person name="Zhai J."/>
            <person name="Li M."/>
            <person name="Cui B."/>
            <person name="Qi Z."/>
            <person name="Jin L."/>
            <person name="Dai R."/>
            <person name="Chen F."/>
            <person name="Li S."/>
            <person name="Ye C."/>
            <person name="Du Z."/>
            <person name="Lin W."/>
            <person name="Wang J."/>
            <person name="Yu J."/>
            <person name="Yang H."/>
            <person name="Wang J."/>
            <person name="Huang P."/>
            <person name="Yang R."/>
        </authorList>
    </citation>
    <scope>NUCLEOTIDE SEQUENCE [LARGE SCALE GENOMIC DNA]</scope>
    <source>
        <strain>91001 / Biovar Mediaevalis</strain>
    </source>
</reference>
<evidence type="ECO:0000255" key="1">
    <source>
        <dbReference type="HAMAP-Rule" id="MF_00072"/>
    </source>
</evidence>
<comment type="function">
    <text evidence="1">Increases the formation of ribosomal termination complexes and stimulates activities of RF-1 and RF-2. It binds guanine nucleotides and has strong preference for UGA stop codons. It may interact directly with the ribosome. The stimulation of RF-1 and RF-2 is significantly reduced by GTP and GDP, but not by GMP.</text>
</comment>
<comment type="subcellular location">
    <subcellularLocation>
        <location evidence="1">Cytoplasm</location>
    </subcellularLocation>
</comment>
<comment type="similarity">
    <text evidence="1">Belongs to the TRAFAC class translation factor GTPase superfamily. Classic translation factor GTPase family. PrfC subfamily.</text>
</comment>
<dbReference type="EMBL" id="AL590842">
    <property type="protein sequence ID" value="CAL19111.1"/>
    <property type="molecule type" value="Genomic_DNA"/>
</dbReference>
<dbReference type="EMBL" id="AE009952">
    <property type="protein sequence ID" value="AAM87294.1"/>
    <property type="molecule type" value="Genomic_DNA"/>
</dbReference>
<dbReference type="EMBL" id="AE017042">
    <property type="protein sequence ID" value="AAS63899.1"/>
    <property type="molecule type" value="Genomic_DNA"/>
</dbReference>
<dbReference type="PIR" id="AE0053">
    <property type="entry name" value="AE0053"/>
</dbReference>
<dbReference type="RefSeq" id="WP_002209209.1">
    <property type="nucleotide sequence ID" value="NZ_WUCM01000002.1"/>
</dbReference>
<dbReference type="RefSeq" id="YP_002345506.1">
    <property type="nucleotide sequence ID" value="NC_003143.1"/>
</dbReference>
<dbReference type="SMR" id="Q8ZIR0"/>
<dbReference type="STRING" id="214092.YPO0430"/>
<dbReference type="PaxDb" id="214092-YPO0430"/>
<dbReference type="DNASU" id="1148696"/>
<dbReference type="EnsemblBacteria" id="AAS63899">
    <property type="protein sequence ID" value="AAS63899"/>
    <property type="gene ID" value="YP_3751"/>
</dbReference>
<dbReference type="GeneID" id="57974180"/>
<dbReference type="KEGG" id="ype:YPO0430"/>
<dbReference type="KEGG" id="ypk:y3749"/>
<dbReference type="KEGG" id="ypm:YP_3751"/>
<dbReference type="PATRIC" id="fig|214092.21.peg.673"/>
<dbReference type="eggNOG" id="COG4108">
    <property type="taxonomic scope" value="Bacteria"/>
</dbReference>
<dbReference type="HOGENOM" id="CLU_002794_2_1_6"/>
<dbReference type="OMA" id="GFVFKIH"/>
<dbReference type="OrthoDB" id="9801472at2"/>
<dbReference type="Proteomes" id="UP000000815">
    <property type="component" value="Chromosome"/>
</dbReference>
<dbReference type="Proteomes" id="UP000001019">
    <property type="component" value="Chromosome"/>
</dbReference>
<dbReference type="Proteomes" id="UP000002490">
    <property type="component" value="Chromosome"/>
</dbReference>
<dbReference type="GO" id="GO:0005829">
    <property type="term" value="C:cytosol"/>
    <property type="evidence" value="ECO:0000318"/>
    <property type="project" value="GO_Central"/>
</dbReference>
<dbReference type="GO" id="GO:0005525">
    <property type="term" value="F:GTP binding"/>
    <property type="evidence" value="ECO:0007669"/>
    <property type="project" value="UniProtKB-UniRule"/>
</dbReference>
<dbReference type="GO" id="GO:0003924">
    <property type="term" value="F:GTPase activity"/>
    <property type="evidence" value="ECO:0007669"/>
    <property type="project" value="InterPro"/>
</dbReference>
<dbReference type="GO" id="GO:0097216">
    <property type="term" value="F:guanosine tetraphosphate binding"/>
    <property type="evidence" value="ECO:0007669"/>
    <property type="project" value="UniProtKB-ARBA"/>
</dbReference>
<dbReference type="GO" id="GO:0016150">
    <property type="term" value="F:translation release factor activity, codon nonspecific"/>
    <property type="evidence" value="ECO:0000318"/>
    <property type="project" value="GO_Central"/>
</dbReference>
<dbReference type="GO" id="GO:0016149">
    <property type="term" value="F:translation release factor activity, codon specific"/>
    <property type="evidence" value="ECO:0007669"/>
    <property type="project" value="UniProtKB-UniRule"/>
</dbReference>
<dbReference type="GO" id="GO:0006449">
    <property type="term" value="P:regulation of translational termination"/>
    <property type="evidence" value="ECO:0007669"/>
    <property type="project" value="UniProtKB-UniRule"/>
</dbReference>
<dbReference type="GO" id="GO:0006415">
    <property type="term" value="P:translational termination"/>
    <property type="evidence" value="ECO:0000318"/>
    <property type="project" value="GO_Central"/>
</dbReference>
<dbReference type="CDD" id="cd04169">
    <property type="entry name" value="RF3"/>
    <property type="match status" value="1"/>
</dbReference>
<dbReference type="CDD" id="cd03689">
    <property type="entry name" value="RF3_II"/>
    <property type="match status" value="1"/>
</dbReference>
<dbReference type="CDD" id="cd16259">
    <property type="entry name" value="RF3_III"/>
    <property type="match status" value="1"/>
</dbReference>
<dbReference type="FunFam" id="2.40.30.10:FF:000040">
    <property type="entry name" value="Peptide chain release factor 3"/>
    <property type="match status" value="1"/>
</dbReference>
<dbReference type="FunFam" id="3.30.70.3280:FF:000001">
    <property type="entry name" value="Peptide chain release factor 3"/>
    <property type="match status" value="1"/>
</dbReference>
<dbReference type="FunFam" id="3.40.50.300:FF:000542">
    <property type="entry name" value="Peptide chain release factor 3"/>
    <property type="match status" value="1"/>
</dbReference>
<dbReference type="Gene3D" id="3.40.50.300">
    <property type="entry name" value="P-loop containing nucleotide triphosphate hydrolases"/>
    <property type="match status" value="2"/>
</dbReference>
<dbReference type="Gene3D" id="3.30.70.3280">
    <property type="entry name" value="Peptide chain release factor 3, domain III"/>
    <property type="match status" value="1"/>
</dbReference>
<dbReference type="HAMAP" id="MF_00072">
    <property type="entry name" value="Rel_fac_3"/>
    <property type="match status" value="1"/>
</dbReference>
<dbReference type="InterPro" id="IPR053905">
    <property type="entry name" value="EF-G-like_DII"/>
</dbReference>
<dbReference type="InterPro" id="IPR035647">
    <property type="entry name" value="EFG_III/V"/>
</dbReference>
<dbReference type="InterPro" id="IPR031157">
    <property type="entry name" value="G_TR_CS"/>
</dbReference>
<dbReference type="InterPro" id="IPR027417">
    <property type="entry name" value="P-loop_NTPase"/>
</dbReference>
<dbReference type="InterPro" id="IPR004548">
    <property type="entry name" value="PrfC"/>
</dbReference>
<dbReference type="InterPro" id="IPR032090">
    <property type="entry name" value="RF3_C"/>
</dbReference>
<dbReference type="InterPro" id="IPR038467">
    <property type="entry name" value="RF3_dom_3_sf"/>
</dbReference>
<dbReference type="InterPro" id="IPR041732">
    <property type="entry name" value="RF3_GTP-bd"/>
</dbReference>
<dbReference type="InterPro" id="IPR005225">
    <property type="entry name" value="Small_GTP-bd"/>
</dbReference>
<dbReference type="InterPro" id="IPR000795">
    <property type="entry name" value="T_Tr_GTP-bd_dom"/>
</dbReference>
<dbReference type="InterPro" id="IPR009000">
    <property type="entry name" value="Transl_B-barrel_sf"/>
</dbReference>
<dbReference type="NCBIfam" id="TIGR00503">
    <property type="entry name" value="prfC"/>
    <property type="match status" value="1"/>
</dbReference>
<dbReference type="NCBIfam" id="NF001964">
    <property type="entry name" value="PRK00741.1"/>
    <property type="match status" value="1"/>
</dbReference>
<dbReference type="NCBIfam" id="TIGR00231">
    <property type="entry name" value="small_GTP"/>
    <property type="match status" value="1"/>
</dbReference>
<dbReference type="PANTHER" id="PTHR43556">
    <property type="entry name" value="PEPTIDE CHAIN RELEASE FACTOR RF3"/>
    <property type="match status" value="1"/>
</dbReference>
<dbReference type="PANTHER" id="PTHR43556:SF2">
    <property type="entry name" value="PEPTIDE CHAIN RELEASE FACTOR RF3"/>
    <property type="match status" value="1"/>
</dbReference>
<dbReference type="Pfam" id="PF22042">
    <property type="entry name" value="EF-G_D2"/>
    <property type="match status" value="1"/>
</dbReference>
<dbReference type="Pfam" id="PF00009">
    <property type="entry name" value="GTP_EFTU"/>
    <property type="match status" value="1"/>
</dbReference>
<dbReference type="Pfam" id="PF16658">
    <property type="entry name" value="RF3_C"/>
    <property type="match status" value="1"/>
</dbReference>
<dbReference type="PRINTS" id="PR00315">
    <property type="entry name" value="ELONGATNFCT"/>
</dbReference>
<dbReference type="SUPFAM" id="SSF54980">
    <property type="entry name" value="EF-G C-terminal domain-like"/>
    <property type="match status" value="1"/>
</dbReference>
<dbReference type="SUPFAM" id="SSF52540">
    <property type="entry name" value="P-loop containing nucleoside triphosphate hydrolases"/>
    <property type="match status" value="1"/>
</dbReference>
<dbReference type="SUPFAM" id="SSF50447">
    <property type="entry name" value="Translation proteins"/>
    <property type="match status" value="1"/>
</dbReference>
<dbReference type="PROSITE" id="PS00301">
    <property type="entry name" value="G_TR_1"/>
    <property type="match status" value="1"/>
</dbReference>
<dbReference type="PROSITE" id="PS51722">
    <property type="entry name" value="G_TR_2"/>
    <property type="match status" value="1"/>
</dbReference>
<feature type="chain" id="PRO_0000210987" description="Peptide chain release factor 3">
    <location>
        <begin position="1"/>
        <end position="529"/>
    </location>
</feature>
<feature type="domain" description="tr-type G">
    <location>
        <begin position="11"/>
        <end position="280"/>
    </location>
</feature>
<feature type="binding site" evidence="1">
    <location>
        <begin position="20"/>
        <end position="27"/>
    </location>
    <ligand>
        <name>GTP</name>
        <dbReference type="ChEBI" id="CHEBI:37565"/>
    </ligand>
</feature>
<feature type="binding site" evidence="1">
    <location>
        <begin position="88"/>
        <end position="92"/>
    </location>
    <ligand>
        <name>GTP</name>
        <dbReference type="ChEBI" id="CHEBI:37565"/>
    </ligand>
</feature>
<feature type="binding site" evidence="1">
    <location>
        <begin position="142"/>
        <end position="145"/>
    </location>
    <ligand>
        <name>GTP</name>
        <dbReference type="ChEBI" id="CHEBI:37565"/>
    </ligand>
</feature>
<protein>
    <recommendedName>
        <fullName evidence="1">Peptide chain release factor 3</fullName>
        <shortName evidence="1">RF-3</shortName>
    </recommendedName>
</protein>
<accession>Q8ZIR0</accession>
<accession>Q0WJN2</accession>